<organism>
    <name type="scientific">Xanthomonas euvesicatoria pv. vesicatoria (strain 85-10)</name>
    <name type="common">Xanthomonas campestris pv. vesicatoria</name>
    <dbReference type="NCBI Taxonomy" id="316273"/>
    <lineage>
        <taxon>Bacteria</taxon>
        <taxon>Pseudomonadati</taxon>
        <taxon>Pseudomonadota</taxon>
        <taxon>Gammaproteobacteria</taxon>
        <taxon>Lysobacterales</taxon>
        <taxon>Lysobacteraceae</taxon>
        <taxon>Xanthomonas</taxon>
    </lineage>
</organism>
<comment type="function">
    <text evidence="1">Catalyzes the reversible oxidation of malate to oxaloacetate.</text>
</comment>
<comment type="catalytic activity">
    <reaction evidence="1">
        <text>(S)-malate + NAD(+) = oxaloacetate + NADH + H(+)</text>
        <dbReference type="Rhea" id="RHEA:21432"/>
        <dbReference type="ChEBI" id="CHEBI:15378"/>
        <dbReference type="ChEBI" id="CHEBI:15589"/>
        <dbReference type="ChEBI" id="CHEBI:16452"/>
        <dbReference type="ChEBI" id="CHEBI:57540"/>
        <dbReference type="ChEBI" id="CHEBI:57945"/>
        <dbReference type="EC" id="1.1.1.37"/>
    </reaction>
</comment>
<comment type="similarity">
    <text evidence="1">Belongs to the LDH/MDH superfamily. MDH type 2 family.</text>
</comment>
<feature type="chain" id="PRO_0000294408" description="Malate dehydrogenase">
    <location>
        <begin position="1"/>
        <end position="328"/>
    </location>
</feature>
<feature type="active site" description="Proton acceptor" evidence="1">
    <location>
        <position position="189"/>
    </location>
</feature>
<feature type="binding site" evidence="1">
    <location>
        <begin position="11"/>
        <end position="17"/>
    </location>
    <ligand>
        <name>NAD(+)</name>
        <dbReference type="ChEBI" id="CHEBI:57540"/>
    </ligand>
</feature>
<feature type="binding site" evidence="1">
    <location>
        <position position="94"/>
    </location>
    <ligand>
        <name>substrate</name>
    </ligand>
</feature>
<feature type="binding site" evidence="1">
    <location>
        <position position="100"/>
    </location>
    <ligand>
        <name>substrate</name>
    </ligand>
</feature>
<feature type="binding site" evidence="1">
    <location>
        <position position="107"/>
    </location>
    <ligand>
        <name>NAD(+)</name>
        <dbReference type="ChEBI" id="CHEBI:57540"/>
    </ligand>
</feature>
<feature type="binding site" evidence="1">
    <location>
        <position position="114"/>
    </location>
    <ligand>
        <name>NAD(+)</name>
        <dbReference type="ChEBI" id="CHEBI:57540"/>
    </ligand>
</feature>
<feature type="binding site" evidence="1">
    <location>
        <begin position="131"/>
        <end position="133"/>
    </location>
    <ligand>
        <name>NAD(+)</name>
        <dbReference type="ChEBI" id="CHEBI:57540"/>
    </ligand>
</feature>
<feature type="binding site" evidence="1">
    <location>
        <position position="133"/>
    </location>
    <ligand>
        <name>substrate</name>
    </ligand>
</feature>
<feature type="binding site" evidence="1">
    <location>
        <position position="164"/>
    </location>
    <ligand>
        <name>substrate</name>
    </ligand>
</feature>
<dbReference type="EC" id="1.1.1.37" evidence="1"/>
<dbReference type="EMBL" id="AM039952">
    <property type="protein sequence ID" value="CAJ22665.1"/>
    <property type="molecule type" value="Genomic_DNA"/>
</dbReference>
<dbReference type="RefSeq" id="WP_008571655.1">
    <property type="nucleotide sequence ID" value="NZ_CP017190.1"/>
</dbReference>
<dbReference type="SMR" id="Q3BWU8"/>
<dbReference type="STRING" id="456327.BJD11_17560"/>
<dbReference type="KEGG" id="xcv:XCV1034"/>
<dbReference type="eggNOG" id="COG0039">
    <property type="taxonomic scope" value="Bacteria"/>
</dbReference>
<dbReference type="HOGENOM" id="CLU_040727_2_0_6"/>
<dbReference type="Proteomes" id="UP000007069">
    <property type="component" value="Chromosome"/>
</dbReference>
<dbReference type="GO" id="GO:0030060">
    <property type="term" value="F:L-malate dehydrogenase (NAD+) activity"/>
    <property type="evidence" value="ECO:0007669"/>
    <property type="project" value="UniProtKB-UniRule"/>
</dbReference>
<dbReference type="GO" id="GO:0006108">
    <property type="term" value="P:malate metabolic process"/>
    <property type="evidence" value="ECO:0007669"/>
    <property type="project" value="InterPro"/>
</dbReference>
<dbReference type="GO" id="GO:0006099">
    <property type="term" value="P:tricarboxylic acid cycle"/>
    <property type="evidence" value="ECO:0007669"/>
    <property type="project" value="UniProtKB-UniRule"/>
</dbReference>
<dbReference type="CDD" id="cd01338">
    <property type="entry name" value="MDH_chloroplast-like"/>
    <property type="match status" value="1"/>
</dbReference>
<dbReference type="FunFam" id="3.40.50.720:FF:000010">
    <property type="entry name" value="Malate dehydrogenase"/>
    <property type="match status" value="1"/>
</dbReference>
<dbReference type="FunFam" id="3.90.110.10:FF:000002">
    <property type="entry name" value="Malate dehydrogenase"/>
    <property type="match status" value="1"/>
</dbReference>
<dbReference type="Gene3D" id="3.90.110.10">
    <property type="entry name" value="Lactate dehydrogenase/glycoside hydrolase, family 4, C-terminal"/>
    <property type="match status" value="1"/>
</dbReference>
<dbReference type="Gene3D" id="3.40.50.720">
    <property type="entry name" value="NAD(P)-binding Rossmann-like Domain"/>
    <property type="match status" value="1"/>
</dbReference>
<dbReference type="HAMAP" id="MF_01517">
    <property type="entry name" value="Malate_dehydrog_2"/>
    <property type="match status" value="1"/>
</dbReference>
<dbReference type="InterPro" id="IPR001557">
    <property type="entry name" value="L-lactate/malate_DH"/>
</dbReference>
<dbReference type="InterPro" id="IPR022383">
    <property type="entry name" value="Lactate/malate_DH_C"/>
</dbReference>
<dbReference type="InterPro" id="IPR001236">
    <property type="entry name" value="Lactate/malate_DH_N"/>
</dbReference>
<dbReference type="InterPro" id="IPR015955">
    <property type="entry name" value="Lactate_DH/Glyco_Ohase_4_C"/>
</dbReference>
<dbReference type="InterPro" id="IPR010945">
    <property type="entry name" value="Malate_DH_type2"/>
</dbReference>
<dbReference type="InterPro" id="IPR036291">
    <property type="entry name" value="NAD(P)-bd_dom_sf"/>
</dbReference>
<dbReference type="NCBIfam" id="TIGR01759">
    <property type="entry name" value="MalateDH-SF1"/>
    <property type="match status" value="1"/>
</dbReference>
<dbReference type="NCBIfam" id="NF003916">
    <property type="entry name" value="PRK05442.1"/>
    <property type="match status" value="1"/>
</dbReference>
<dbReference type="PANTHER" id="PTHR23382">
    <property type="entry name" value="MALATE DEHYDROGENASE"/>
    <property type="match status" value="1"/>
</dbReference>
<dbReference type="Pfam" id="PF02866">
    <property type="entry name" value="Ldh_1_C"/>
    <property type="match status" value="1"/>
</dbReference>
<dbReference type="Pfam" id="PF00056">
    <property type="entry name" value="Ldh_1_N"/>
    <property type="match status" value="1"/>
</dbReference>
<dbReference type="PIRSF" id="PIRSF000102">
    <property type="entry name" value="Lac_mal_DH"/>
    <property type="match status" value="1"/>
</dbReference>
<dbReference type="SUPFAM" id="SSF56327">
    <property type="entry name" value="LDH C-terminal domain-like"/>
    <property type="match status" value="1"/>
</dbReference>
<dbReference type="SUPFAM" id="SSF51735">
    <property type="entry name" value="NAD(P)-binding Rossmann-fold domains"/>
    <property type="match status" value="1"/>
</dbReference>
<keyword id="KW-0520">NAD</keyword>
<keyword id="KW-0560">Oxidoreductase</keyword>
<keyword id="KW-0816">Tricarboxylic acid cycle</keyword>
<name>MDH_XANE5</name>
<evidence type="ECO:0000255" key="1">
    <source>
        <dbReference type="HAMAP-Rule" id="MF_01517"/>
    </source>
</evidence>
<reference key="1">
    <citation type="journal article" date="2005" name="J. Bacteriol.">
        <title>Insights into genome plasticity and pathogenicity of the plant pathogenic Bacterium Xanthomonas campestris pv. vesicatoria revealed by the complete genome sequence.</title>
        <authorList>
            <person name="Thieme F."/>
            <person name="Koebnik R."/>
            <person name="Bekel T."/>
            <person name="Berger C."/>
            <person name="Boch J."/>
            <person name="Buettner D."/>
            <person name="Caldana C."/>
            <person name="Gaigalat L."/>
            <person name="Goesmann A."/>
            <person name="Kay S."/>
            <person name="Kirchner O."/>
            <person name="Lanz C."/>
            <person name="Linke B."/>
            <person name="McHardy A.C."/>
            <person name="Meyer F."/>
            <person name="Mittenhuber G."/>
            <person name="Nies D.H."/>
            <person name="Niesbach-Kloesgen U."/>
            <person name="Patschkowski T."/>
            <person name="Rueckert C."/>
            <person name="Rupp O."/>
            <person name="Schneiker S."/>
            <person name="Schuster S.C."/>
            <person name="Vorhoelter F.J."/>
            <person name="Weber E."/>
            <person name="Puehler A."/>
            <person name="Bonas U."/>
            <person name="Bartels D."/>
            <person name="Kaiser O."/>
        </authorList>
    </citation>
    <scope>NUCLEOTIDE SEQUENCE [LARGE SCALE GENOMIC DNA]</scope>
    <source>
        <strain>85-10</strain>
    </source>
</reference>
<sequence>MKAPVRVAVTGAAGQIGYALLFRIASGEMLGKDQPVILQLLELPIEKAQAALKGVMMELEDCAFPLLAGMVGTDDAEVAFKDVDIALLVGSRPRGPGMERKDLLLANAEIFTAQGAALNKVAKRDVKVLVVGNPANTNAYIAMKSAPDLDPKNFTAMLRLDHNRALSQLSAKLGKPVAGIEKLAVWGNHSPTMYPDYRFATADGASVGDAINDQEWNASTFIPTVGKRGAAIIEARGLSSAASAANAAIDHIRDWVLGTNGKWVTMGVPSDGSYGIPEGVMFGFPVTTENGKYTIVKDLPIDDFSQKYIDKTLAELEEERSGVAHLLG</sequence>
<proteinExistence type="inferred from homology"/>
<protein>
    <recommendedName>
        <fullName evidence="1">Malate dehydrogenase</fullName>
        <ecNumber evidence="1">1.1.1.37</ecNumber>
    </recommendedName>
</protein>
<accession>Q3BWU8</accession>
<gene>
    <name evidence="1" type="primary">mdh</name>
    <name type="ordered locus">XCV1034</name>
</gene>